<name>YDEA_SCHPO</name>
<reference key="1">
    <citation type="journal article" date="2002" name="Nature">
        <title>The genome sequence of Schizosaccharomyces pombe.</title>
        <authorList>
            <person name="Wood V."/>
            <person name="Gwilliam R."/>
            <person name="Rajandream M.A."/>
            <person name="Lyne M.H."/>
            <person name="Lyne R."/>
            <person name="Stewart A."/>
            <person name="Sgouros J.G."/>
            <person name="Peat N."/>
            <person name="Hayles J."/>
            <person name="Baker S.G."/>
            <person name="Basham D."/>
            <person name="Bowman S."/>
            <person name="Brooks K."/>
            <person name="Brown D."/>
            <person name="Brown S."/>
            <person name="Chillingworth T."/>
            <person name="Churcher C.M."/>
            <person name="Collins M."/>
            <person name="Connor R."/>
            <person name="Cronin A."/>
            <person name="Davis P."/>
            <person name="Feltwell T."/>
            <person name="Fraser A."/>
            <person name="Gentles S."/>
            <person name="Goble A."/>
            <person name="Hamlin N."/>
            <person name="Harris D.E."/>
            <person name="Hidalgo J."/>
            <person name="Hodgson G."/>
            <person name="Holroyd S."/>
            <person name="Hornsby T."/>
            <person name="Howarth S."/>
            <person name="Huckle E.J."/>
            <person name="Hunt S."/>
            <person name="Jagels K."/>
            <person name="James K.D."/>
            <person name="Jones L."/>
            <person name="Jones M."/>
            <person name="Leather S."/>
            <person name="McDonald S."/>
            <person name="McLean J."/>
            <person name="Mooney P."/>
            <person name="Moule S."/>
            <person name="Mungall K.L."/>
            <person name="Murphy L.D."/>
            <person name="Niblett D."/>
            <person name="Odell C."/>
            <person name="Oliver K."/>
            <person name="O'Neil S."/>
            <person name="Pearson D."/>
            <person name="Quail M.A."/>
            <person name="Rabbinowitsch E."/>
            <person name="Rutherford K.M."/>
            <person name="Rutter S."/>
            <person name="Saunders D."/>
            <person name="Seeger K."/>
            <person name="Sharp S."/>
            <person name="Skelton J."/>
            <person name="Simmonds M.N."/>
            <person name="Squares R."/>
            <person name="Squares S."/>
            <person name="Stevens K."/>
            <person name="Taylor K."/>
            <person name="Taylor R.G."/>
            <person name="Tivey A."/>
            <person name="Walsh S.V."/>
            <person name="Warren T."/>
            <person name="Whitehead S."/>
            <person name="Woodward J.R."/>
            <person name="Volckaert G."/>
            <person name="Aert R."/>
            <person name="Robben J."/>
            <person name="Grymonprez B."/>
            <person name="Weltjens I."/>
            <person name="Vanstreels E."/>
            <person name="Rieger M."/>
            <person name="Schaefer M."/>
            <person name="Mueller-Auer S."/>
            <person name="Gabel C."/>
            <person name="Fuchs M."/>
            <person name="Duesterhoeft A."/>
            <person name="Fritzc C."/>
            <person name="Holzer E."/>
            <person name="Moestl D."/>
            <person name="Hilbert H."/>
            <person name="Borzym K."/>
            <person name="Langer I."/>
            <person name="Beck A."/>
            <person name="Lehrach H."/>
            <person name="Reinhardt R."/>
            <person name="Pohl T.M."/>
            <person name="Eger P."/>
            <person name="Zimmermann W."/>
            <person name="Wedler H."/>
            <person name="Wambutt R."/>
            <person name="Purnelle B."/>
            <person name="Goffeau A."/>
            <person name="Cadieu E."/>
            <person name="Dreano S."/>
            <person name="Gloux S."/>
            <person name="Lelaure V."/>
            <person name="Mottier S."/>
            <person name="Galibert F."/>
            <person name="Aves S.J."/>
            <person name="Xiang Z."/>
            <person name="Hunt C."/>
            <person name="Moore K."/>
            <person name="Hurst S.M."/>
            <person name="Lucas M."/>
            <person name="Rochet M."/>
            <person name="Gaillardin C."/>
            <person name="Tallada V.A."/>
            <person name="Garzon A."/>
            <person name="Thode G."/>
            <person name="Daga R.R."/>
            <person name="Cruzado L."/>
            <person name="Jimenez J."/>
            <person name="Sanchez M."/>
            <person name="del Rey F."/>
            <person name="Benito J."/>
            <person name="Dominguez A."/>
            <person name="Revuelta J.L."/>
            <person name="Moreno S."/>
            <person name="Armstrong J."/>
            <person name="Forsburg S.L."/>
            <person name="Cerutti L."/>
            <person name="Lowe T."/>
            <person name="McCombie W.R."/>
            <person name="Paulsen I."/>
            <person name="Potashkin J."/>
            <person name="Shpakovski G.V."/>
            <person name="Ussery D."/>
            <person name="Barrell B.G."/>
            <person name="Nurse P."/>
        </authorList>
    </citation>
    <scope>NUCLEOTIDE SEQUENCE [LARGE SCALE GENOMIC DNA]</scope>
    <source>
        <strain>972 / ATCC 24843</strain>
    </source>
</reference>
<gene>
    <name type="ORF">SPAC12B10.10</name>
</gene>
<organism>
    <name type="scientific">Schizosaccharomyces pombe (strain 972 / ATCC 24843)</name>
    <name type="common">Fission yeast</name>
    <dbReference type="NCBI Taxonomy" id="284812"/>
    <lineage>
        <taxon>Eukaryota</taxon>
        <taxon>Fungi</taxon>
        <taxon>Dikarya</taxon>
        <taxon>Ascomycota</taxon>
        <taxon>Taphrinomycotina</taxon>
        <taxon>Schizosaccharomycetes</taxon>
        <taxon>Schizosaccharomycetales</taxon>
        <taxon>Schizosaccharomycetaceae</taxon>
        <taxon>Schizosaccharomyces</taxon>
    </lineage>
</organism>
<dbReference type="EMBL" id="CU329670">
    <property type="protein sequence ID" value="CAA94700.1"/>
    <property type="molecule type" value="Genomic_DNA"/>
</dbReference>
<dbReference type="PIR" id="T37577">
    <property type="entry name" value="T37577"/>
</dbReference>
<dbReference type="SMR" id="Q10443"/>
<dbReference type="BioGRID" id="279466">
    <property type="interactions" value="20"/>
</dbReference>
<dbReference type="STRING" id="284812.Q10443"/>
<dbReference type="iPTMnet" id="Q10443"/>
<dbReference type="PaxDb" id="4896-SPAC12B10.10.1"/>
<dbReference type="EnsemblFungi" id="SPAC12B10.10.1">
    <property type="protein sequence ID" value="SPAC12B10.10.1:pep"/>
    <property type="gene ID" value="SPAC12B10.10"/>
</dbReference>
<dbReference type="KEGG" id="spo:2543030"/>
<dbReference type="PomBase" id="SPAC12B10.10"/>
<dbReference type="VEuPathDB" id="FungiDB:SPAC12B10.10"/>
<dbReference type="HOGENOM" id="CLU_655798_0_0_1"/>
<dbReference type="InParanoid" id="Q10443"/>
<dbReference type="OMA" id="RYEAAFY"/>
<dbReference type="PRO" id="PR:Q10443"/>
<dbReference type="Proteomes" id="UP000002485">
    <property type="component" value="Chromosome I"/>
</dbReference>
<dbReference type="GO" id="GO:0032153">
    <property type="term" value="C:cell division site"/>
    <property type="evidence" value="ECO:0007005"/>
    <property type="project" value="PomBase"/>
</dbReference>
<dbReference type="GO" id="GO:0071341">
    <property type="term" value="C:medial cortical node"/>
    <property type="evidence" value="ECO:0000314"/>
    <property type="project" value="PomBase"/>
</dbReference>
<dbReference type="GO" id="GO:0110085">
    <property type="term" value="C:mitotic actomyosin contractile ring"/>
    <property type="evidence" value="ECO:0000314"/>
    <property type="project" value="PomBase"/>
</dbReference>
<dbReference type="GO" id="GO:0120105">
    <property type="term" value="C:mitotic actomyosin contractile ring, intermediate layer"/>
    <property type="evidence" value="ECO:0000314"/>
    <property type="project" value="PomBase"/>
</dbReference>
<dbReference type="GO" id="GO:1902408">
    <property type="term" value="P:mitotic cytokinesis, division site positioning"/>
    <property type="evidence" value="ECO:0000315"/>
    <property type="project" value="PomBase"/>
</dbReference>
<dbReference type="InterPro" id="IPR032634">
    <property type="entry name" value="Gef2/Nod1_dom"/>
</dbReference>
<dbReference type="Pfam" id="PF17114">
    <property type="entry name" value="Nod1"/>
    <property type="match status" value="1"/>
</dbReference>
<feature type="chain" id="PRO_0000116612" description="Uncharacterized protein C12B10.10">
    <location>
        <begin position="1"/>
        <end position="419"/>
    </location>
</feature>
<keyword id="KW-1185">Reference proteome</keyword>
<sequence>MEKPLPNPPIQESLRKQSPQDAVYDDLVFGLKRYEAAFSIKDSIEDVLANFSKDEEKEMVCLSTSIAENPYQSLSLESVPSKILFGSFLFYVKDRIPEKAGYIIEEQFCKRLQQIDYDAYSFSPKECNEKLKNIFSEFSQMKLKMLSVFFSIVQILLPKLSGDYQEHVQFFASISAVVAPRGYVFEIYHAVEHLSLEAREVFQLHHPPSPKQTRRVVSEGPLNGVNYKQNTTNNRVSSFQNSQYSTLNNFQNNSNQSPNSNDLQPLQAEAFHSAHNGYSSSTLNLNSELNVMKDHDLQAPIPRALKQHKLPPIPVPEVQTTNIGYQTDLPLQNPNDNLVSLAIYEALYEKFLKACKDLEEVSKSYEESREEIEALHETFTEEVTSFQSTKRLKEEKIIQEKSRVDKMIDEYRQKLSEST</sequence>
<protein>
    <recommendedName>
        <fullName>Uncharacterized protein C12B10.10</fullName>
    </recommendedName>
</protein>
<accession>Q10443</accession>
<proteinExistence type="predicted"/>